<dbReference type="EC" id="3.4.21.53" evidence="1"/>
<dbReference type="EMBL" id="CP000909">
    <property type="protein sequence ID" value="ABY34036.1"/>
    <property type="molecule type" value="Genomic_DNA"/>
</dbReference>
<dbReference type="RefSeq" id="WP_012256692.1">
    <property type="nucleotide sequence ID" value="NC_010175.1"/>
</dbReference>
<dbReference type="RefSeq" id="YP_001634425.1">
    <property type="nucleotide sequence ID" value="NC_010175.1"/>
</dbReference>
<dbReference type="SMR" id="A9WGB5"/>
<dbReference type="STRING" id="324602.Caur_0798"/>
<dbReference type="EnsemblBacteria" id="ABY34036">
    <property type="protein sequence ID" value="ABY34036"/>
    <property type="gene ID" value="Caur_0798"/>
</dbReference>
<dbReference type="KEGG" id="cau:Caur_0798"/>
<dbReference type="PATRIC" id="fig|324602.8.peg.909"/>
<dbReference type="eggNOG" id="COG0466">
    <property type="taxonomic scope" value="Bacteria"/>
</dbReference>
<dbReference type="HOGENOM" id="CLU_004109_4_3_0"/>
<dbReference type="InParanoid" id="A9WGB5"/>
<dbReference type="Proteomes" id="UP000002008">
    <property type="component" value="Chromosome"/>
</dbReference>
<dbReference type="GO" id="GO:0005737">
    <property type="term" value="C:cytoplasm"/>
    <property type="evidence" value="ECO:0007669"/>
    <property type="project" value="UniProtKB-SubCell"/>
</dbReference>
<dbReference type="GO" id="GO:0005524">
    <property type="term" value="F:ATP binding"/>
    <property type="evidence" value="ECO:0007669"/>
    <property type="project" value="UniProtKB-UniRule"/>
</dbReference>
<dbReference type="GO" id="GO:0016887">
    <property type="term" value="F:ATP hydrolysis activity"/>
    <property type="evidence" value="ECO:0007669"/>
    <property type="project" value="UniProtKB-UniRule"/>
</dbReference>
<dbReference type="GO" id="GO:0004176">
    <property type="term" value="F:ATP-dependent peptidase activity"/>
    <property type="evidence" value="ECO:0007669"/>
    <property type="project" value="UniProtKB-UniRule"/>
</dbReference>
<dbReference type="GO" id="GO:0043565">
    <property type="term" value="F:sequence-specific DNA binding"/>
    <property type="evidence" value="ECO:0007669"/>
    <property type="project" value="UniProtKB-UniRule"/>
</dbReference>
<dbReference type="GO" id="GO:0004252">
    <property type="term" value="F:serine-type endopeptidase activity"/>
    <property type="evidence" value="ECO:0007669"/>
    <property type="project" value="UniProtKB-UniRule"/>
</dbReference>
<dbReference type="GO" id="GO:0034605">
    <property type="term" value="P:cellular response to heat"/>
    <property type="evidence" value="ECO:0007669"/>
    <property type="project" value="UniProtKB-UniRule"/>
</dbReference>
<dbReference type="GO" id="GO:0006515">
    <property type="term" value="P:protein quality control for misfolded or incompletely synthesized proteins"/>
    <property type="evidence" value="ECO:0007669"/>
    <property type="project" value="UniProtKB-UniRule"/>
</dbReference>
<dbReference type="CDD" id="cd19500">
    <property type="entry name" value="RecA-like_Lon"/>
    <property type="match status" value="1"/>
</dbReference>
<dbReference type="FunFam" id="1.20.5.5270:FF:000002">
    <property type="entry name" value="Lon protease homolog"/>
    <property type="match status" value="1"/>
</dbReference>
<dbReference type="FunFam" id="3.40.50.300:FF:000021">
    <property type="entry name" value="Lon protease homolog"/>
    <property type="match status" value="1"/>
</dbReference>
<dbReference type="Gene3D" id="1.10.8.60">
    <property type="match status" value="1"/>
</dbReference>
<dbReference type="Gene3D" id="1.20.5.5270">
    <property type="match status" value="1"/>
</dbReference>
<dbReference type="Gene3D" id="1.20.58.1480">
    <property type="match status" value="1"/>
</dbReference>
<dbReference type="Gene3D" id="3.30.230.10">
    <property type="match status" value="1"/>
</dbReference>
<dbReference type="Gene3D" id="2.30.130.40">
    <property type="entry name" value="LON domain-like"/>
    <property type="match status" value="1"/>
</dbReference>
<dbReference type="Gene3D" id="3.40.50.300">
    <property type="entry name" value="P-loop containing nucleotide triphosphate hydrolases"/>
    <property type="match status" value="1"/>
</dbReference>
<dbReference type="HAMAP" id="MF_01973">
    <property type="entry name" value="lon_bact"/>
    <property type="match status" value="1"/>
</dbReference>
<dbReference type="InterPro" id="IPR003593">
    <property type="entry name" value="AAA+_ATPase"/>
</dbReference>
<dbReference type="InterPro" id="IPR003959">
    <property type="entry name" value="ATPase_AAA_core"/>
</dbReference>
<dbReference type="InterPro" id="IPR027543">
    <property type="entry name" value="Lon_bac"/>
</dbReference>
<dbReference type="InterPro" id="IPR004815">
    <property type="entry name" value="Lon_bac/euk-typ"/>
</dbReference>
<dbReference type="InterPro" id="IPR054594">
    <property type="entry name" value="Lon_lid"/>
</dbReference>
<dbReference type="InterPro" id="IPR008269">
    <property type="entry name" value="Lon_proteolytic"/>
</dbReference>
<dbReference type="InterPro" id="IPR027065">
    <property type="entry name" value="Lon_Prtase"/>
</dbReference>
<dbReference type="InterPro" id="IPR003111">
    <property type="entry name" value="Lon_prtase_N"/>
</dbReference>
<dbReference type="InterPro" id="IPR046336">
    <property type="entry name" value="Lon_prtase_N_sf"/>
</dbReference>
<dbReference type="InterPro" id="IPR027417">
    <property type="entry name" value="P-loop_NTPase"/>
</dbReference>
<dbReference type="InterPro" id="IPR008268">
    <property type="entry name" value="Peptidase_S16_AS"/>
</dbReference>
<dbReference type="InterPro" id="IPR015947">
    <property type="entry name" value="PUA-like_sf"/>
</dbReference>
<dbReference type="InterPro" id="IPR020568">
    <property type="entry name" value="Ribosomal_Su5_D2-typ_SF"/>
</dbReference>
<dbReference type="InterPro" id="IPR014721">
    <property type="entry name" value="Ribsml_uS5_D2-typ_fold_subgr"/>
</dbReference>
<dbReference type="NCBIfam" id="TIGR00763">
    <property type="entry name" value="lon"/>
    <property type="match status" value="1"/>
</dbReference>
<dbReference type="PANTHER" id="PTHR10046">
    <property type="entry name" value="ATP DEPENDENT LON PROTEASE FAMILY MEMBER"/>
    <property type="match status" value="1"/>
</dbReference>
<dbReference type="Pfam" id="PF00004">
    <property type="entry name" value="AAA"/>
    <property type="match status" value="1"/>
</dbReference>
<dbReference type="Pfam" id="PF05362">
    <property type="entry name" value="Lon_C"/>
    <property type="match status" value="1"/>
</dbReference>
<dbReference type="Pfam" id="PF22667">
    <property type="entry name" value="Lon_lid"/>
    <property type="match status" value="1"/>
</dbReference>
<dbReference type="Pfam" id="PF02190">
    <property type="entry name" value="LON_substr_bdg"/>
    <property type="match status" value="1"/>
</dbReference>
<dbReference type="PIRSF" id="PIRSF001174">
    <property type="entry name" value="Lon_proteas"/>
    <property type="match status" value="1"/>
</dbReference>
<dbReference type="PRINTS" id="PR00830">
    <property type="entry name" value="ENDOLAPTASE"/>
</dbReference>
<dbReference type="SMART" id="SM00382">
    <property type="entry name" value="AAA"/>
    <property type="match status" value="1"/>
</dbReference>
<dbReference type="SMART" id="SM00464">
    <property type="entry name" value="LON"/>
    <property type="match status" value="1"/>
</dbReference>
<dbReference type="SUPFAM" id="SSF52540">
    <property type="entry name" value="P-loop containing nucleoside triphosphate hydrolases"/>
    <property type="match status" value="1"/>
</dbReference>
<dbReference type="SUPFAM" id="SSF88697">
    <property type="entry name" value="PUA domain-like"/>
    <property type="match status" value="1"/>
</dbReference>
<dbReference type="SUPFAM" id="SSF54211">
    <property type="entry name" value="Ribosomal protein S5 domain 2-like"/>
    <property type="match status" value="1"/>
</dbReference>
<dbReference type="PROSITE" id="PS51787">
    <property type="entry name" value="LON_N"/>
    <property type="match status" value="1"/>
</dbReference>
<dbReference type="PROSITE" id="PS51786">
    <property type="entry name" value="LON_PROTEOLYTIC"/>
    <property type="match status" value="1"/>
</dbReference>
<dbReference type="PROSITE" id="PS01046">
    <property type="entry name" value="LON_SER"/>
    <property type="match status" value="1"/>
</dbReference>
<gene>
    <name evidence="1" type="primary">lon</name>
    <name type="ordered locus">Caur_0798</name>
</gene>
<sequence length="827" mass="91352">MNDETLREQTTAESEETSPTTPSPEPEVVETLPLIPLEGAVVFPYIVVSLTLDELGSASAEAAAREGRQVLLAARRPDAPADAPITDQLFNVGVVARIEQLGTLPNGASGVVVRGLVRAVLGEAVQTTPYLRFRFTRRPDVFERTPELEQLMVEVHAAIDAVLELRPGVTQEIRNFVRSIDDPGHLADNTGYSPDYTFAERQELLETFDVSERLRKVLMFYRKQFALLEVQAKLRQEVQESAARQQREFYLRQQLRAIQKELGEDTSEAAELDDLRQKLAAADLPEVARKEADRELSRLARINASSPEYQMVRTYLEWLAELPWNKYTGQPIDIAFARQVLDEDHHGLQKVKERILEYLAVKQRRAALGEENLRANREPILAFVGPPGVGKTSLGQSIARALGRSFVRMSLGGVRDEAELRGFRRTYIGSQPGRIIQELRRAGTADPVILLDEIDKLGIDYRGDPAAALLEVLDPEQNHTFTDHYLNLPFDLSRVLFLATANTWDTVPPALRDRMEVIELSGYIEDEKVQIAQIHLVPRQLRANGLRPEEAVVTEDAIRCIINEYTREAGVRNLERSIGAVLRKVARRLSEGEIDPANTPFVVDAAFVRAALGRPRFTNETRERIDQPGVAIGLVWTPVGGDIIFVEASAVEGKKELTITGQLGEVMRESAEAALTYVRSRARSLGIEPDFFETHAIHIHVPAGAVPKDGPSAGITMATALASAATGRLVRDDIAMTGEISLRGRVLPIGGIKEKALGAHRAGIRTVILPRRNLIDLDDLPPAVSAEMTFIPVDTLDEVLSIALLPPATTTDTLTVAQRSDVLTPAS</sequence>
<organism>
    <name type="scientific">Chloroflexus aurantiacus (strain ATCC 29366 / DSM 635 / J-10-fl)</name>
    <dbReference type="NCBI Taxonomy" id="324602"/>
    <lineage>
        <taxon>Bacteria</taxon>
        <taxon>Bacillati</taxon>
        <taxon>Chloroflexota</taxon>
        <taxon>Chloroflexia</taxon>
        <taxon>Chloroflexales</taxon>
        <taxon>Chloroflexineae</taxon>
        <taxon>Chloroflexaceae</taxon>
        <taxon>Chloroflexus</taxon>
    </lineage>
</organism>
<proteinExistence type="inferred from homology"/>
<evidence type="ECO:0000255" key="1">
    <source>
        <dbReference type="HAMAP-Rule" id="MF_01973"/>
    </source>
</evidence>
<evidence type="ECO:0000255" key="2">
    <source>
        <dbReference type="PROSITE-ProRule" id="PRU01122"/>
    </source>
</evidence>
<evidence type="ECO:0000255" key="3">
    <source>
        <dbReference type="PROSITE-ProRule" id="PRU01123"/>
    </source>
</evidence>
<evidence type="ECO:0000256" key="4">
    <source>
        <dbReference type="SAM" id="MobiDB-lite"/>
    </source>
</evidence>
<keyword id="KW-0067">ATP-binding</keyword>
<keyword id="KW-0963">Cytoplasm</keyword>
<keyword id="KW-0378">Hydrolase</keyword>
<keyword id="KW-0547">Nucleotide-binding</keyword>
<keyword id="KW-0645">Protease</keyword>
<keyword id="KW-1185">Reference proteome</keyword>
<keyword id="KW-0720">Serine protease</keyword>
<keyword id="KW-0346">Stress response</keyword>
<comment type="function">
    <text evidence="1">ATP-dependent serine protease that mediates the selective degradation of mutant and abnormal proteins as well as certain short-lived regulatory proteins. Required for cellular homeostasis and for survival from DNA damage and developmental changes induced by stress. Degrades polypeptides processively to yield small peptide fragments that are 5 to 10 amino acids long. Binds to DNA in a double-stranded, site-specific manner.</text>
</comment>
<comment type="catalytic activity">
    <reaction evidence="1">
        <text>Hydrolysis of proteins in presence of ATP.</text>
        <dbReference type="EC" id="3.4.21.53"/>
    </reaction>
</comment>
<comment type="subunit">
    <text evidence="1">Homohexamer. Organized in a ring with a central cavity.</text>
</comment>
<comment type="subcellular location">
    <subcellularLocation>
        <location evidence="1">Cytoplasm</location>
    </subcellularLocation>
</comment>
<comment type="induction">
    <text evidence="1">By heat shock.</text>
</comment>
<comment type="similarity">
    <text evidence="1">Belongs to the peptidase S16 family.</text>
</comment>
<protein>
    <recommendedName>
        <fullName evidence="1">Lon protease</fullName>
        <ecNumber evidence="1">3.4.21.53</ecNumber>
    </recommendedName>
    <alternativeName>
        <fullName evidence="1">ATP-dependent protease La</fullName>
    </alternativeName>
</protein>
<accession>A9WGB5</accession>
<name>LON_CHLAA</name>
<reference key="1">
    <citation type="journal article" date="2011" name="BMC Genomics">
        <title>Complete genome sequence of the filamentous anoxygenic phototrophic bacterium Chloroflexus aurantiacus.</title>
        <authorList>
            <person name="Tang K.H."/>
            <person name="Barry K."/>
            <person name="Chertkov O."/>
            <person name="Dalin E."/>
            <person name="Han C.S."/>
            <person name="Hauser L.J."/>
            <person name="Honchak B.M."/>
            <person name="Karbach L.E."/>
            <person name="Land M.L."/>
            <person name="Lapidus A."/>
            <person name="Larimer F.W."/>
            <person name="Mikhailova N."/>
            <person name="Pitluck S."/>
            <person name="Pierson B.K."/>
            <person name="Blankenship R.E."/>
        </authorList>
    </citation>
    <scope>NUCLEOTIDE SEQUENCE [LARGE SCALE GENOMIC DNA]</scope>
    <source>
        <strain>ATCC 29366 / DSM 635 / J-10-fl</strain>
    </source>
</reference>
<feature type="chain" id="PRO_0000396544" description="Lon protease">
    <location>
        <begin position="1"/>
        <end position="827"/>
    </location>
</feature>
<feature type="domain" description="Lon N-terminal" evidence="3">
    <location>
        <begin position="32"/>
        <end position="225"/>
    </location>
</feature>
<feature type="domain" description="Lon proteolytic" evidence="2">
    <location>
        <begin position="625"/>
        <end position="806"/>
    </location>
</feature>
<feature type="region of interest" description="Disordered" evidence="4">
    <location>
        <begin position="1"/>
        <end position="27"/>
    </location>
</feature>
<feature type="active site" evidence="1">
    <location>
        <position position="712"/>
    </location>
</feature>
<feature type="active site" evidence="1">
    <location>
        <position position="755"/>
    </location>
</feature>
<feature type="binding site" evidence="1">
    <location>
        <begin position="385"/>
        <end position="392"/>
    </location>
    <ligand>
        <name>ATP</name>
        <dbReference type="ChEBI" id="CHEBI:30616"/>
    </ligand>
</feature>